<keyword id="KW-0004">4Fe-4S</keyword>
<keyword id="KW-0408">Iron</keyword>
<keyword id="KW-0411">Iron-sulfur</keyword>
<keyword id="KW-0413">Isomerase</keyword>
<keyword id="KW-0479">Metal-binding</keyword>
<keyword id="KW-0663">Pyridoxal phosphate</keyword>
<keyword id="KW-1185">Reference proteome</keyword>
<keyword id="KW-0949">S-adenosyl-L-methionine</keyword>
<feature type="chain" id="PRO_0000172288" description="L-lysine 2,3-aminomutase">
    <location>
        <begin position="1"/>
        <end position="342"/>
    </location>
</feature>
<feature type="domain" description="Radical SAM core" evidence="3">
    <location>
        <begin position="106"/>
        <end position="329"/>
    </location>
</feature>
<feature type="binding site" evidence="2">
    <location>
        <position position="120"/>
    </location>
    <ligand>
        <name>[4Fe-4S] cluster</name>
        <dbReference type="ChEBI" id="CHEBI:49883"/>
        <note>4Fe-4S-S-AdoMet</note>
    </ligand>
</feature>
<feature type="binding site" evidence="2">
    <location>
        <position position="124"/>
    </location>
    <ligand>
        <name>[4Fe-4S] cluster</name>
        <dbReference type="ChEBI" id="CHEBI:49883"/>
        <note>4Fe-4S-S-AdoMet</note>
    </ligand>
</feature>
<feature type="binding site" evidence="2">
    <location>
        <position position="127"/>
    </location>
    <ligand>
        <name>[4Fe-4S] cluster</name>
        <dbReference type="ChEBI" id="CHEBI:49883"/>
        <note>4Fe-4S-S-AdoMet</note>
    </ligand>
</feature>
<feature type="modified residue" description="N6-(pyridoxal phosphate)lysine" evidence="1">
    <location>
        <position position="332"/>
    </location>
</feature>
<proteinExistence type="evidence at protein level"/>
<gene>
    <name type="primary">epmB</name>
    <name type="synonym">yjeK</name>
    <name type="ordered locus">b4146</name>
    <name type="ordered locus">JW4106</name>
</gene>
<dbReference type="EC" id="5.4.3.-"/>
<dbReference type="EMBL" id="U14003">
    <property type="protein sequence ID" value="AAA97045.1"/>
    <property type="molecule type" value="Genomic_DNA"/>
</dbReference>
<dbReference type="EMBL" id="U00096">
    <property type="protein sequence ID" value="AAC77106.1"/>
    <property type="molecule type" value="Genomic_DNA"/>
</dbReference>
<dbReference type="EMBL" id="AP009048">
    <property type="protein sequence ID" value="BAE78148.1"/>
    <property type="molecule type" value="Genomic_DNA"/>
</dbReference>
<dbReference type="PIR" id="S56374">
    <property type="entry name" value="S56374"/>
</dbReference>
<dbReference type="RefSeq" id="NP_418570.1">
    <property type="nucleotide sequence ID" value="NC_000913.3"/>
</dbReference>
<dbReference type="RefSeq" id="WP_000940549.1">
    <property type="nucleotide sequence ID" value="NZ_LN832404.1"/>
</dbReference>
<dbReference type="SMR" id="P39280"/>
<dbReference type="BioGRID" id="4260715">
    <property type="interactions" value="5"/>
</dbReference>
<dbReference type="BioGRID" id="852954">
    <property type="interactions" value="1"/>
</dbReference>
<dbReference type="FunCoup" id="P39280">
    <property type="interactions" value="116"/>
</dbReference>
<dbReference type="IntAct" id="P39280">
    <property type="interactions" value="16"/>
</dbReference>
<dbReference type="STRING" id="511145.b4146"/>
<dbReference type="jPOST" id="P39280"/>
<dbReference type="PaxDb" id="511145-b4146"/>
<dbReference type="EnsemblBacteria" id="AAC77106">
    <property type="protein sequence ID" value="AAC77106"/>
    <property type="gene ID" value="b4146"/>
</dbReference>
<dbReference type="GeneID" id="948662"/>
<dbReference type="KEGG" id="ecj:JW4106"/>
<dbReference type="KEGG" id="eco:b4146"/>
<dbReference type="KEGG" id="ecoc:C3026_22405"/>
<dbReference type="PATRIC" id="fig|1411691.4.peg.2554"/>
<dbReference type="EchoBASE" id="EB2366"/>
<dbReference type="eggNOG" id="COG1509">
    <property type="taxonomic scope" value="Bacteria"/>
</dbReference>
<dbReference type="HOGENOM" id="CLU_032161_2_0_6"/>
<dbReference type="InParanoid" id="P39280"/>
<dbReference type="OMA" id="CAIHCRY"/>
<dbReference type="OrthoDB" id="9770937at2"/>
<dbReference type="PhylomeDB" id="P39280"/>
<dbReference type="BioCyc" id="EcoCyc:G7836-MONOMER"/>
<dbReference type="BioCyc" id="MetaCyc:G7836-MONOMER"/>
<dbReference type="PRO" id="PR:P39280"/>
<dbReference type="Proteomes" id="UP000000625">
    <property type="component" value="Chromosome"/>
</dbReference>
<dbReference type="GO" id="GO:0051539">
    <property type="term" value="F:4 iron, 4 sulfur cluster binding"/>
    <property type="evidence" value="ECO:0000314"/>
    <property type="project" value="EcoCyc"/>
</dbReference>
<dbReference type="GO" id="GO:0016869">
    <property type="term" value="F:intramolecular aminotransferase activity"/>
    <property type="evidence" value="ECO:0000314"/>
    <property type="project" value="EcoCyc"/>
</dbReference>
<dbReference type="GO" id="GO:0046872">
    <property type="term" value="F:metal ion binding"/>
    <property type="evidence" value="ECO:0007669"/>
    <property type="project" value="UniProtKB-KW"/>
</dbReference>
<dbReference type="CDD" id="cd01335">
    <property type="entry name" value="Radical_SAM"/>
    <property type="match status" value="1"/>
</dbReference>
<dbReference type="FunFam" id="3.20.20.70:FF:000143">
    <property type="entry name" value="EF-P beta-lysylation protein EpmB"/>
    <property type="match status" value="1"/>
</dbReference>
<dbReference type="Gene3D" id="3.20.20.70">
    <property type="entry name" value="Aldolase class I"/>
    <property type="match status" value="1"/>
</dbReference>
<dbReference type="InterPro" id="IPR013785">
    <property type="entry name" value="Aldolase_TIM"/>
</dbReference>
<dbReference type="InterPro" id="IPR022462">
    <property type="entry name" value="EpmB"/>
</dbReference>
<dbReference type="InterPro" id="IPR003739">
    <property type="entry name" value="Lys_aminomutase/Glu_NH3_mut"/>
</dbReference>
<dbReference type="InterPro" id="IPR007197">
    <property type="entry name" value="rSAM"/>
</dbReference>
<dbReference type="NCBIfam" id="TIGR03821">
    <property type="entry name" value="EFP_modif_epmB"/>
    <property type="match status" value="1"/>
</dbReference>
<dbReference type="NCBIfam" id="TIGR00238">
    <property type="entry name" value="KamA family radical SAM protein"/>
    <property type="match status" value="1"/>
</dbReference>
<dbReference type="PANTHER" id="PTHR30538:SF1">
    <property type="entry name" value="L-LYSINE 2,3-AMINOMUTASE"/>
    <property type="match status" value="1"/>
</dbReference>
<dbReference type="PANTHER" id="PTHR30538">
    <property type="entry name" value="LYSINE 2,3-AMINOMUTASE-RELATED"/>
    <property type="match status" value="1"/>
</dbReference>
<dbReference type="Pfam" id="PF13353">
    <property type="entry name" value="Fer4_12"/>
    <property type="match status" value="1"/>
</dbReference>
<dbReference type="Pfam" id="PF04055">
    <property type="entry name" value="Radical_SAM"/>
    <property type="match status" value="1"/>
</dbReference>
<dbReference type="PIRSF" id="PIRSF004911">
    <property type="entry name" value="DUF160"/>
    <property type="match status" value="1"/>
</dbReference>
<dbReference type="SFLD" id="SFLDF00314">
    <property type="entry name" value="L-lysine_2_3-aminomutase_(yjeK"/>
    <property type="match status" value="1"/>
</dbReference>
<dbReference type="SFLD" id="SFLDS00029">
    <property type="entry name" value="Radical_SAM"/>
    <property type="match status" value="1"/>
</dbReference>
<dbReference type="SUPFAM" id="SSF102114">
    <property type="entry name" value="Radical SAM enzymes"/>
    <property type="match status" value="1"/>
</dbReference>
<dbReference type="PROSITE" id="PS51918">
    <property type="entry name" value="RADICAL_SAM"/>
    <property type="match status" value="1"/>
</dbReference>
<protein>
    <recommendedName>
        <fullName>L-lysine 2,3-aminomutase</fullName>
        <shortName>LAM</shortName>
        <ecNumber>5.4.3.-</ecNumber>
    </recommendedName>
    <alternativeName>
        <fullName>EF-P post-translational modification enzyme B</fullName>
    </alternativeName>
</protein>
<sequence length="342" mass="38750">MAHIVTLNTPSREDWLTQLADVVTDPDELLRLLNIDAEEKLLAGRSAKKLFALRVPRSFIDRMEKGNPDDPLLRQVLTSQDEFVIAPGFSTDPLEEQHSVVPGLLHKYHNRALLLVKGGCAVNCRYCFRRHFPYAENQGNKRNWQTALEYVAAHPELDEMIFSGGDPLMAKDHELDWLLTQLEAIPHIKRLRIHSRLPIVIPARITEALVECFARSTLQILLVNHINHANEVDETFRQAMAKLRRVGVTLLNQSVLLRDVNDNAQTLANLSNALFDAGVMPYYLHVLDKVQGAAHFMVSDDEARQIMRELLTLVSGYLVPKLAREIGGEPSKTPLDLQLRQQ</sequence>
<comment type="function">
    <text evidence="4 5 6">With EpmA is involved in the beta-lysylation step of the post-translational modification of translation elongation factor P (EF-P) on 'Lys-34'. EpmB appears to act before EpmA. Displays lysine 2,3-aminomutase activity, producing (R)-beta-lysine from (S)-alpha-lysine (L-lysine). Cannot use (S)-ornithine or (R)-alpha-lysine as a substrate.</text>
</comment>
<comment type="catalytic activity">
    <reaction evidence="4">
        <text>L-lysine = D-beta-lysine</text>
        <dbReference type="Rhea" id="RHEA:44148"/>
        <dbReference type="ChEBI" id="CHEBI:32551"/>
        <dbReference type="ChEBI" id="CHEBI:84138"/>
    </reaction>
</comment>
<comment type="cofactor">
    <cofactor evidence="4">
        <name>[4Fe-4S] cluster</name>
        <dbReference type="ChEBI" id="CHEBI:49883"/>
    </cofactor>
    <text evidence="4">Binds 1 [4Fe-4S] cluster. The cluster is coordinated with 3 cysteines and an exchangeable S-adenosyl-L-methionine.</text>
</comment>
<comment type="cofactor">
    <cofactor evidence="4">
        <name>pyridoxal 5'-phosphate</name>
        <dbReference type="ChEBI" id="CHEBI:597326"/>
    </cofactor>
</comment>
<comment type="biophysicochemical properties">
    <kinetics>
        <KM evidence="4">5 mM for L-lysine (at pH 8 and 25 degrees Celsius)</KM>
        <text>kcat is 4.8 min(-1) (at pH 8 and 25 degrees Celsius).</text>
    </kinetics>
</comment>
<comment type="disruption phenotype">
    <text evidence="7">Cells lack CadA activity (lysine decarboxylase).</text>
</comment>
<comment type="similarity">
    <text evidence="8">Belongs to the radical SAM superfamily. KamA family.</text>
</comment>
<name>EPMB_ECOLI</name>
<evidence type="ECO:0000250" key="1"/>
<evidence type="ECO:0000255" key="2"/>
<evidence type="ECO:0000255" key="3">
    <source>
        <dbReference type="PROSITE-ProRule" id="PRU01266"/>
    </source>
</evidence>
<evidence type="ECO:0000269" key="4">
    <source>
    </source>
</evidence>
<evidence type="ECO:0000269" key="5">
    <source>
    </source>
</evidence>
<evidence type="ECO:0000269" key="6">
    <source>
    </source>
</evidence>
<evidence type="ECO:0000269" key="7">
    <source>
    </source>
</evidence>
<evidence type="ECO:0000305" key="8"/>
<accession>P39280</accession>
<accession>Q2M6F8</accession>
<organism>
    <name type="scientific">Escherichia coli (strain K12)</name>
    <dbReference type="NCBI Taxonomy" id="83333"/>
    <lineage>
        <taxon>Bacteria</taxon>
        <taxon>Pseudomonadati</taxon>
        <taxon>Pseudomonadota</taxon>
        <taxon>Gammaproteobacteria</taxon>
        <taxon>Enterobacterales</taxon>
        <taxon>Enterobacteriaceae</taxon>
        <taxon>Escherichia</taxon>
    </lineage>
</organism>
<reference key="1">
    <citation type="journal article" date="1995" name="Nucleic Acids Res.">
        <title>Analysis of the Escherichia coli genome VI: DNA sequence of the region from 92.8 through 100 minutes.</title>
        <authorList>
            <person name="Burland V.D."/>
            <person name="Plunkett G. III"/>
            <person name="Sofia H.J."/>
            <person name="Daniels D.L."/>
            <person name="Blattner F.R."/>
        </authorList>
    </citation>
    <scope>NUCLEOTIDE SEQUENCE [LARGE SCALE GENOMIC DNA]</scope>
    <source>
        <strain>K12 / MG1655 / ATCC 47076</strain>
    </source>
</reference>
<reference key="2">
    <citation type="journal article" date="1997" name="Science">
        <title>The complete genome sequence of Escherichia coli K-12.</title>
        <authorList>
            <person name="Blattner F.R."/>
            <person name="Plunkett G. III"/>
            <person name="Bloch C.A."/>
            <person name="Perna N.T."/>
            <person name="Burland V."/>
            <person name="Riley M."/>
            <person name="Collado-Vides J."/>
            <person name="Glasner J.D."/>
            <person name="Rode C.K."/>
            <person name="Mayhew G.F."/>
            <person name="Gregor J."/>
            <person name="Davis N.W."/>
            <person name="Kirkpatrick H.A."/>
            <person name="Goeden M.A."/>
            <person name="Rose D.J."/>
            <person name="Mau B."/>
            <person name="Shao Y."/>
        </authorList>
    </citation>
    <scope>NUCLEOTIDE SEQUENCE [LARGE SCALE GENOMIC DNA]</scope>
    <source>
        <strain>K12 / MG1655 / ATCC 47076</strain>
    </source>
</reference>
<reference key="3">
    <citation type="journal article" date="2006" name="Mol. Syst. Biol.">
        <title>Highly accurate genome sequences of Escherichia coli K-12 strains MG1655 and W3110.</title>
        <authorList>
            <person name="Hayashi K."/>
            <person name="Morooka N."/>
            <person name="Yamamoto Y."/>
            <person name="Fujita K."/>
            <person name="Isono K."/>
            <person name="Choi S."/>
            <person name="Ohtsubo E."/>
            <person name="Baba T."/>
            <person name="Wanner B.L."/>
            <person name="Mori H."/>
            <person name="Horiuchi T."/>
        </authorList>
    </citation>
    <scope>NUCLEOTIDE SEQUENCE [LARGE SCALE GENOMIC DNA]</scope>
    <source>
        <strain>K12 / W3110 / ATCC 27325 / DSM 5911</strain>
    </source>
</reference>
<reference key="4">
    <citation type="journal article" date="2006" name="Biochemistry">
        <title>Enantiomeric free radicals and enzymatic control of stereochemistry in a radical mechanism: the case of lysine 2,3-aminomutases.</title>
        <authorList>
            <person name="Behshad E."/>
            <person name="Ruzicka F.J."/>
            <person name="Mansoorabadi S.O."/>
            <person name="Chen D."/>
            <person name="Reed G.H."/>
            <person name="Frey P.A."/>
        </authorList>
    </citation>
    <scope>FUNCTION AS A LYSINE 2,3-AMINOMUTASE</scope>
    <scope>CATALYTIC ACTIVITY</scope>
    <scope>COFACTOR</scope>
    <scope>KINETIC PARAMETERS</scope>
    <scope>REACTION MECHANISM</scope>
</reference>
<reference key="5">
    <citation type="journal article" date="2010" name="Biol. Direct">
        <title>Predicting the pathway involved in post-translational modification of Elongation factor P in a subset of bacterial species.</title>
        <authorList>
            <person name="Bailly M."/>
            <person name="de Crecy-Lagard V."/>
        </authorList>
    </citation>
    <scope>POSSIBLE FUNCTION</scope>
</reference>
<reference key="6">
    <citation type="journal article" date="2010" name="Nat. Struct. Mol. Biol.">
        <title>A paralog of lysyl-tRNA synthetase aminoacylates a conserved lysine residue in translation elongation factor P.</title>
        <authorList>
            <person name="Yanagisawa T."/>
            <person name="Sumida T."/>
            <person name="Ishii R."/>
            <person name="Takemoto C."/>
            <person name="Yokoyama S."/>
        </authorList>
    </citation>
    <scope>FUNCTION IN EF-P LYSYLATION</scope>
    <source>
        <strain>K12</strain>
    </source>
</reference>
<reference key="7">
    <citation type="journal article" date="2012" name="J. Biol. Chem.">
        <title>Post-translational modification by beta-lysylation is required for activity of Escherichia coli elongation factor P (EF-P).</title>
        <authorList>
            <person name="Park J.H."/>
            <person name="Johansson H.E."/>
            <person name="Aoki H."/>
            <person name="Huang B.X."/>
            <person name="Kim H.Y."/>
            <person name="Ganoza M.C."/>
            <person name="Park M.H."/>
        </authorList>
    </citation>
    <scope>FUNCTION IN EF-P BETA-LYSYLATION</scope>
    <source>
        <strain>K12 / MG1655 / ATCC 47076</strain>
    </source>
</reference>
<reference key="8">
    <citation type="journal article" date="2012" name="Nat. Chem. Biol.">
        <title>Lys34 of translation elongation factor EF-P is hydroxylated by YfcM.</title>
        <authorList>
            <person name="Peil L."/>
            <person name="Starosta A.L."/>
            <person name="Virumae K."/>
            <person name="Atkinson G.C."/>
            <person name="Tenson T."/>
            <person name="Remme J."/>
            <person name="Wilson D.N."/>
        </authorList>
    </citation>
    <scope>GENE NAME</scope>
    <scope>PATHWAY</scope>
</reference>
<reference key="9">
    <citation type="journal article" date="2013" name="Science">
        <title>Translation elongation factor EF-P alleviates ribosome stalling at polyproline stretches.</title>
        <authorList>
            <person name="Ude S."/>
            <person name="Lassak J."/>
            <person name="Starosta A.L."/>
            <person name="Kraxenberger T."/>
            <person name="Wilson D.N."/>
            <person name="Jung K."/>
        </authorList>
    </citation>
    <scope>DISRUPTION PHENOTYPE</scope>
    <source>
        <strain>K12 / BW25113</strain>
        <strain>K12 / MG1655 / ATCC 47076</strain>
    </source>
</reference>